<evidence type="ECO:0000250" key="1"/>
<evidence type="ECO:0000250" key="2">
    <source>
        <dbReference type="UniProtKB" id="D4A7P2"/>
    </source>
</evidence>
<evidence type="ECO:0000255" key="3"/>
<evidence type="ECO:0000269" key="4">
    <source>
    </source>
</evidence>
<evidence type="ECO:0000305" key="5"/>
<evidence type="ECO:0007829" key="6">
    <source>
        <dbReference type="PDB" id="5Z8X"/>
    </source>
</evidence>
<evidence type="ECO:0007829" key="7">
    <source>
        <dbReference type="PDB" id="5Z8Y"/>
    </source>
</evidence>
<accession>O43300</accession>
<accession>A0AVL3</accession>
<accession>A8K4U9</accession>
<accession>B7ZLN8</accession>
<accession>Q7L770</accession>
<comment type="function">
    <text evidence="2">Involved in the development and maintenance of excitatory synapses in the vertebrate nervous system. Regulates surface expression of AMPA receptors and instructs the development of functional glutamate release sites. Acts as a ligand for the presynaptic receptors NRXN1-A and NRXN1-B (By similarity).</text>
</comment>
<comment type="subunit">
    <text evidence="2">Interacts with DLG4. Interacts with neurexin NRXN1; interaction is mediated by heparan sulfate glycan modification on neurexin.</text>
</comment>
<comment type="interaction">
    <interactant intactId="EBI-18096461">
        <id>O43300</id>
    </interactant>
    <interactant intactId="EBI-10171534">
        <id>A0PK00</id>
        <label>TMEM120B</label>
    </interactant>
    <organismsDiffer>false</organismsDiffer>
    <experiments>3</experiments>
</comment>
<comment type="interaction">
    <interactant intactId="EBI-18096461">
        <id>O43300</id>
    </interactant>
    <interactant intactId="EBI-359977">
        <id>P01375</id>
        <label>TNF</label>
    </interactant>
    <organismsDiffer>false</organismsDiffer>
    <experiments>3</experiments>
</comment>
<comment type="subcellular location">
    <subcellularLocation>
        <location>Cell membrane</location>
        <topology>Single-pass type I membrane protein</topology>
    </subcellularLocation>
    <subcellularLocation>
        <location evidence="1">Postsynaptic cell membrane</location>
        <topology evidence="1">Single-pass type I membrane protein</topology>
    </subcellularLocation>
    <text evidence="1">Localized to excitatory synapses.</text>
</comment>
<comment type="tissue specificity">
    <text evidence="4">Expressed in neuronal tissues.</text>
</comment>
<comment type="domain">
    <text evidence="1">Synaptogenic effects are mediated by the extracellular LRR region.</text>
</comment>
<comment type="similarity">
    <text evidence="5">Belongs to the LRRTM family.</text>
</comment>
<comment type="sequence caution" evidence="5">
    <conflict type="erroneous initiation">
        <sequence resource="EMBL-CDS" id="BAA24846"/>
    </conflict>
    <text>Extended N-terminus.</text>
</comment>
<gene>
    <name type="primary">LRRTM2</name>
    <name type="synonym">KIAA0416</name>
    <name type="synonym">LRRN2</name>
</gene>
<reference key="1">
    <citation type="journal article" date="2003" name="Genomics">
        <title>A novel gene family encoding leucine-rich repeat transmembrane proteins differentially expressed in the nervous system.</title>
        <authorList>
            <person name="Lauren J."/>
            <person name="Airaksinen M.S."/>
            <person name="Saarma M."/>
            <person name="Timmusk T.T."/>
        </authorList>
    </citation>
    <scope>NUCLEOTIDE SEQUENCE [MRNA]</scope>
    <scope>TISSUE SPECIFICITY</scope>
</reference>
<reference key="2">
    <citation type="journal article" date="1997" name="DNA Res.">
        <title>Prediction of the coding sequences of unidentified human genes. VIII. 78 new cDNA clones from brain which code for large proteins in vitro.</title>
        <authorList>
            <person name="Ishikawa K."/>
            <person name="Nagase T."/>
            <person name="Nakajima D."/>
            <person name="Seki N."/>
            <person name="Ohira M."/>
            <person name="Miyajima N."/>
            <person name="Tanaka A."/>
            <person name="Kotani H."/>
            <person name="Nomura N."/>
            <person name="Ohara O."/>
        </authorList>
    </citation>
    <scope>NUCLEOTIDE SEQUENCE [LARGE SCALE MRNA]</scope>
    <source>
        <tissue>Brain</tissue>
    </source>
</reference>
<reference key="3">
    <citation type="journal article" date="2004" name="Nat. Genet.">
        <title>Complete sequencing and characterization of 21,243 full-length human cDNAs.</title>
        <authorList>
            <person name="Ota T."/>
            <person name="Suzuki Y."/>
            <person name="Nishikawa T."/>
            <person name="Otsuki T."/>
            <person name="Sugiyama T."/>
            <person name="Irie R."/>
            <person name="Wakamatsu A."/>
            <person name="Hayashi K."/>
            <person name="Sato H."/>
            <person name="Nagai K."/>
            <person name="Kimura K."/>
            <person name="Makita H."/>
            <person name="Sekine M."/>
            <person name="Obayashi M."/>
            <person name="Nishi T."/>
            <person name="Shibahara T."/>
            <person name="Tanaka T."/>
            <person name="Ishii S."/>
            <person name="Yamamoto J."/>
            <person name="Saito K."/>
            <person name="Kawai Y."/>
            <person name="Isono Y."/>
            <person name="Nakamura Y."/>
            <person name="Nagahari K."/>
            <person name="Murakami K."/>
            <person name="Yasuda T."/>
            <person name="Iwayanagi T."/>
            <person name="Wagatsuma M."/>
            <person name="Shiratori A."/>
            <person name="Sudo H."/>
            <person name="Hosoiri T."/>
            <person name="Kaku Y."/>
            <person name="Kodaira H."/>
            <person name="Kondo H."/>
            <person name="Sugawara M."/>
            <person name="Takahashi M."/>
            <person name="Kanda K."/>
            <person name="Yokoi T."/>
            <person name="Furuya T."/>
            <person name="Kikkawa E."/>
            <person name="Omura Y."/>
            <person name="Abe K."/>
            <person name="Kamihara K."/>
            <person name="Katsuta N."/>
            <person name="Sato K."/>
            <person name="Tanikawa M."/>
            <person name="Yamazaki M."/>
            <person name="Ninomiya K."/>
            <person name="Ishibashi T."/>
            <person name="Yamashita H."/>
            <person name="Murakawa K."/>
            <person name="Fujimori K."/>
            <person name="Tanai H."/>
            <person name="Kimata M."/>
            <person name="Watanabe M."/>
            <person name="Hiraoka S."/>
            <person name="Chiba Y."/>
            <person name="Ishida S."/>
            <person name="Ono Y."/>
            <person name="Takiguchi S."/>
            <person name="Watanabe S."/>
            <person name="Yosida M."/>
            <person name="Hotuta T."/>
            <person name="Kusano J."/>
            <person name="Kanehori K."/>
            <person name="Takahashi-Fujii A."/>
            <person name="Hara H."/>
            <person name="Tanase T.-O."/>
            <person name="Nomura Y."/>
            <person name="Togiya S."/>
            <person name="Komai F."/>
            <person name="Hara R."/>
            <person name="Takeuchi K."/>
            <person name="Arita M."/>
            <person name="Imose N."/>
            <person name="Musashino K."/>
            <person name="Yuuki H."/>
            <person name="Oshima A."/>
            <person name="Sasaki N."/>
            <person name="Aotsuka S."/>
            <person name="Yoshikawa Y."/>
            <person name="Matsunawa H."/>
            <person name="Ichihara T."/>
            <person name="Shiohata N."/>
            <person name="Sano S."/>
            <person name="Moriya S."/>
            <person name="Momiyama H."/>
            <person name="Satoh N."/>
            <person name="Takami S."/>
            <person name="Terashima Y."/>
            <person name="Suzuki O."/>
            <person name="Nakagawa S."/>
            <person name="Senoh A."/>
            <person name="Mizoguchi H."/>
            <person name="Goto Y."/>
            <person name="Shimizu F."/>
            <person name="Wakebe H."/>
            <person name="Hishigaki H."/>
            <person name="Watanabe T."/>
            <person name="Sugiyama A."/>
            <person name="Takemoto M."/>
            <person name="Kawakami B."/>
            <person name="Yamazaki M."/>
            <person name="Watanabe K."/>
            <person name="Kumagai A."/>
            <person name="Itakura S."/>
            <person name="Fukuzumi Y."/>
            <person name="Fujimori Y."/>
            <person name="Komiyama M."/>
            <person name="Tashiro H."/>
            <person name="Tanigami A."/>
            <person name="Fujiwara T."/>
            <person name="Ono T."/>
            <person name="Yamada K."/>
            <person name="Fujii Y."/>
            <person name="Ozaki K."/>
            <person name="Hirao M."/>
            <person name="Ohmori Y."/>
            <person name="Kawabata A."/>
            <person name="Hikiji T."/>
            <person name="Kobatake N."/>
            <person name="Inagaki H."/>
            <person name="Ikema Y."/>
            <person name="Okamoto S."/>
            <person name="Okitani R."/>
            <person name="Kawakami T."/>
            <person name="Noguchi S."/>
            <person name="Itoh T."/>
            <person name="Shigeta K."/>
            <person name="Senba T."/>
            <person name="Matsumura K."/>
            <person name="Nakajima Y."/>
            <person name="Mizuno T."/>
            <person name="Morinaga M."/>
            <person name="Sasaki M."/>
            <person name="Togashi T."/>
            <person name="Oyama M."/>
            <person name="Hata H."/>
            <person name="Watanabe M."/>
            <person name="Komatsu T."/>
            <person name="Mizushima-Sugano J."/>
            <person name="Satoh T."/>
            <person name="Shirai Y."/>
            <person name="Takahashi Y."/>
            <person name="Nakagawa K."/>
            <person name="Okumura K."/>
            <person name="Nagase T."/>
            <person name="Nomura N."/>
            <person name="Kikuchi H."/>
            <person name="Masuho Y."/>
            <person name="Yamashita R."/>
            <person name="Nakai K."/>
            <person name="Yada T."/>
            <person name="Nakamura Y."/>
            <person name="Ohara O."/>
            <person name="Isogai T."/>
            <person name="Sugano S."/>
        </authorList>
    </citation>
    <scope>NUCLEOTIDE SEQUENCE [LARGE SCALE MRNA]</scope>
</reference>
<reference key="4">
    <citation type="journal article" date="2004" name="Genome Res.">
        <title>The status, quality, and expansion of the NIH full-length cDNA project: the Mammalian Gene Collection (MGC).</title>
        <authorList>
            <consortium name="The MGC Project Team"/>
        </authorList>
    </citation>
    <scope>NUCLEOTIDE SEQUENCE [LARGE SCALE MRNA]</scope>
    <source>
        <tissue>Lung</tissue>
    </source>
</reference>
<organism>
    <name type="scientific">Homo sapiens</name>
    <name type="common">Human</name>
    <dbReference type="NCBI Taxonomy" id="9606"/>
    <lineage>
        <taxon>Eukaryota</taxon>
        <taxon>Metazoa</taxon>
        <taxon>Chordata</taxon>
        <taxon>Craniata</taxon>
        <taxon>Vertebrata</taxon>
        <taxon>Euteleostomi</taxon>
        <taxon>Mammalia</taxon>
        <taxon>Eutheria</taxon>
        <taxon>Euarchontoglires</taxon>
        <taxon>Primates</taxon>
        <taxon>Haplorrhini</taxon>
        <taxon>Catarrhini</taxon>
        <taxon>Hominidae</taxon>
        <taxon>Homo</taxon>
    </lineage>
</organism>
<sequence>MGLHFKWPLGAPMLAAIYAMSMVLKMLPALGMACPPKCRCEKLLFYCDSQGFHSVPNATDKGSLGLSLRHNHITELERDQFASFSQLTWLHLDHNQISTVKEDAFQGLYKLKELILSSNKIFYLPNTTFTQLINLQNLDLSFNQLSSLHPELFYGLRKLQTLHLRSNSLRTIPVRLFWDCRSLEFLDLSTNRLRSLARNGFAGLIKLRELHLEHNQLTKINFAHFLRLSSLHTLFLQWNKISNLTCGMEWTWGTLEKLDLTGNEIKAIDLTVFETMPNLKILLMDNNKLNSLDSKILNSLRSLTTVGLSGNLWECSARICALASWLGSFQGRWEHSILCHSPDHTQGEDILDAVHGFQLCWNLSTTVTVMATTYRDPTTEYTKRISSSSYHVGDKEIPTTAGIAVTTEEHFPEPDNAIFTQRVITGTMALLFSFFFIIFIVFISRKCCPPTLRRIRQCSMVQNHRQLRSQTRLHMSNMSDQGPYNEYEPTHEGPFIIINGYGQCKCQQLPYKECEV</sequence>
<protein>
    <recommendedName>
        <fullName>Leucine-rich repeat transmembrane neuronal protein 2</fullName>
    </recommendedName>
    <alternativeName>
        <fullName>Leucine-rich repeat neuronal 2 protein</fullName>
    </alternativeName>
</protein>
<proteinExistence type="evidence at protein level"/>
<feature type="signal peptide" evidence="3">
    <location>
        <begin position="1"/>
        <end position="33"/>
    </location>
</feature>
<feature type="chain" id="PRO_0000018353" description="Leucine-rich repeat transmembrane neuronal protein 2">
    <location>
        <begin position="34"/>
        <end position="516"/>
    </location>
</feature>
<feature type="topological domain" description="Extracellular" evidence="3">
    <location>
        <begin position="34"/>
        <end position="422"/>
    </location>
</feature>
<feature type="transmembrane region" description="Helical" evidence="3">
    <location>
        <begin position="423"/>
        <end position="443"/>
    </location>
</feature>
<feature type="topological domain" description="Cytoplasmic" evidence="3">
    <location>
        <begin position="444"/>
        <end position="516"/>
    </location>
</feature>
<feature type="domain" description="LRRNT">
    <location>
        <begin position="34"/>
        <end position="61"/>
    </location>
</feature>
<feature type="repeat" description="LRR 1">
    <location>
        <begin position="63"/>
        <end position="83"/>
    </location>
</feature>
<feature type="repeat" description="LRR 2">
    <location>
        <begin position="86"/>
        <end position="107"/>
    </location>
</feature>
<feature type="repeat" description="LRR 3">
    <location>
        <begin position="110"/>
        <end position="131"/>
    </location>
</feature>
<feature type="repeat" description="LRR 4">
    <location>
        <begin position="134"/>
        <end position="155"/>
    </location>
</feature>
<feature type="repeat" description="LRR 5">
    <location>
        <begin position="158"/>
        <end position="179"/>
    </location>
</feature>
<feature type="repeat" description="LRR 6">
    <location>
        <begin position="182"/>
        <end position="203"/>
    </location>
</feature>
<feature type="repeat" description="LRR 7">
    <location>
        <begin position="206"/>
        <end position="227"/>
    </location>
</feature>
<feature type="repeat" description="LRR 8">
    <location>
        <begin position="230"/>
        <end position="251"/>
    </location>
</feature>
<feature type="repeat" description="LRR 9">
    <location>
        <begin position="254"/>
        <end position="275"/>
    </location>
</feature>
<feature type="repeat" description="LRR 10">
    <location>
        <begin position="278"/>
        <end position="299"/>
    </location>
</feature>
<feature type="domain" description="LRRCT">
    <location>
        <begin position="311"/>
        <end position="362"/>
    </location>
</feature>
<feature type="short sequence motif" description="Involved in DLG4-binding" evidence="1">
    <location>
        <begin position="513"/>
        <end position="516"/>
    </location>
</feature>
<feature type="glycosylation site" description="N-linked (GlcNAc...) asparagine" evidence="3">
    <location>
        <position position="57"/>
    </location>
</feature>
<feature type="glycosylation site" description="N-linked (GlcNAc...) asparagine" evidence="3">
    <location>
        <position position="126"/>
    </location>
</feature>
<feature type="glycosylation site" description="N-linked (GlcNAc...) asparagine" evidence="3">
    <location>
        <position position="243"/>
    </location>
</feature>
<feature type="glycosylation site" description="N-linked (GlcNAc...) asparagine" evidence="3">
    <location>
        <position position="362"/>
    </location>
</feature>
<feature type="sequence conflict" description="In Ref. 3; BAF83753." evidence="5" ref="3">
    <original>E</original>
    <variation>G</variation>
    <location>
        <position position="334"/>
    </location>
</feature>
<feature type="strand" evidence="6">
    <location>
        <begin position="41"/>
        <end position="46"/>
    </location>
</feature>
<feature type="strand" evidence="6">
    <location>
        <begin position="64"/>
        <end position="67"/>
    </location>
</feature>
<feature type="turn" evidence="6">
    <location>
        <begin position="78"/>
        <end position="81"/>
    </location>
</feature>
<feature type="strand" evidence="6">
    <location>
        <begin position="88"/>
        <end position="91"/>
    </location>
</feature>
<feature type="turn" evidence="6">
    <location>
        <begin position="102"/>
        <end position="107"/>
    </location>
</feature>
<feature type="strand" evidence="6">
    <location>
        <begin position="113"/>
        <end position="115"/>
    </location>
</feature>
<feature type="turn" evidence="7">
    <location>
        <begin position="126"/>
        <end position="131"/>
    </location>
</feature>
<feature type="strand" evidence="6">
    <location>
        <begin position="137"/>
        <end position="139"/>
    </location>
</feature>
<feature type="turn" evidence="6">
    <location>
        <begin position="150"/>
        <end position="155"/>
    </location>
</feature>
<feature type="strand" evidence="6">
    <location>
        <begin position="161"/>
        <end position="163"/>
    </location>
</feature>
<feature type="turn" evidence="6">
    <location>
        <begin position="174"/>
        <end position="179"/>
    </location>
</feature>
<feature type="strand" evidence="6">
    <location>
        <begin position="185"/>
        <end position="187"/>
    </location>
</feature>
<feature type="turn" evidence="7">
    <location>
        <begin position="198"/>
        <end position="203"/>
    </location>
</feature>
<feature type="strand" evidence="6">
    <location>
        <begin position="209"/>
        <end position="211"/>
    </location>
</feature>
<feature type="strand" evidence="6">
    <location>
        <begin position="219"/>
        <end position="221"/>
    </location>
</feature>
<feature type="helix" evidence="6">
    <location>
        <begin position="222"/>
        <end position="225"/>
    </location>
</feature>
<feature type="strand" evidence="6">
    <location>
        <begin position="233"/>
        <end position="235"/>
    </location>
</feature>
<feature type="strand" evidence="6">
    <location>
        <begin position="243"/>
        <end position="245"/>
    </location>
</feature>
<feature type="strand" evidence="6">
    <location>
        <begin position="257"/>
        <end position="259"/>
    </location>
</feature>
<feature type="turn" evidence="6">
    <location>
        <begin position="270"/>
        <end position="275"/>
    </location>
</feature>
<feature type="strand" evidence="6">
    <location>
        <begin position="281"/>
        <end position="283"/>
    </location>
</feature>
<feature type="helix" evidence="6">
    <location>
        <begin position="294"/>
        <end position="297"/>
    </location>
</feature>
<feature type="strand" evidence="6">
    <location>
        <begin position="304"/>
        <end position="307"/>
    </location>
</feature>
<feature type="helix" evidence="6">
    <location>
        <begin position="317"/>
        <end position="319"/>
    </location>
</feature>
<feature type="helix" evidence="6">
    <location>
        <begin position="320"/>
        <end position="328"/>
    </location>
</feature>
<feature type="strand" evidence="7">
    <location>
        <begin position="331"/>
        <end position="335"/>
    </location>
</feature>
<feature type="turn" evidence="6">
    <location>
        <begin position="343"/>
        <end position="347"/>
    </location>
</feature>
<feature type="helix" evidence="6">
    <location>
        <begin position="350"/>
        <end position="356"/>
    </location>
</feature>
<dbReference type="EMBL" id="AY182026">
    <property type="protein sequence ID" value="AAO67547.1"/>
    <property type="molecule type" value="mRNA"/>
</dbReference>
<dbReference type="EMBL" id="AB007876">
    <property type="protein sequence ID" value="BAA24846.2"/>
    <property type="status" value="ALT_INIT"/>
    <property type="molecule type" value="mRNA"/>
</dbReference>
<dbReference type="EMBL" id="AK291064">
    <property type="protein sequence ID" value="BAF83753.1"/>
    <property type="molecule type" value="mRNA"/>
</dbReference>
<dbReference type="EMBL" id="BC126408">
    <property type="protein sequence ID" value="AAI26409.1"/>
    <property type="molecule type" value="mRNA"/>
</dbReference>
<dbReference type="EMBL" id="BC126410">
    <property type="protein sequence ID" value="AAI26411.1"/>
    <property type="molecule type" value="mRNA"/>
</dbReference>
<dbReference type="EMBL" id="BC143926">
    <property type="protein sequence ID" value="AAI43927.1"/>
    <property type="molecule type" value="mRNA"/>
</dbReference>
<dbReference type="CCDS" id="CCDS47272.1"/>
<dbReference type="RefSeq" id="NP_056379.1">
    <property type="nucleotide sequence ID" value="NM_015564.3"/>
</dbReference>
<dbReference type="PDB" id="5Z8X">
    <property type="method" value="X-ray"/>
    <property type="resolution" value="3.15 A"/>
    <property type="chains" value="A/B/C/D=34-373"/>
</dbReference>
<dbReference type="PDB" id="5Z8Y">
    <property type="method" value="X-ray"/>
    <property type="resolution" value="3.40 A"/>
    <property type="chains" value="A/C/E/G=34-371"/>
</dbReference>
<dbReference type="PDBsum" id="5Z8X"/>
<dbReference type="PDBsum" id="5Z8Y"/>
<dbReference type="SMR" id="O43300"/>
<dbReference type="BioGRID" id="117508">
    <property type="interactions" value="22"/>
</dbReference>
<dbReference type="FunCoup" id="O43300">
    <property type="interactions" value="40"/>
</dbReference>
<dbReference type="IntAct" id="O43300">
    <property type="interactions" value="12"/>
</dbReference>
<dbReference type="MINT" id="O43300"/>
<dbReference type="STRING" id="9606.ENSP00000274711"/>
<dbReference type="GlyCosmos" id="O43300">
    <property type="glycosylation" value="4 sites, No reported glycans"/>
</dbReference>
<dbReference type="GlyGen" id="O43300">
    <property type="glycosylation" value="4 sites"/>
</dbReference>
<dbReference type="iPTMnet" id="O43300"/>
<dbReference type="PhosphoSitePlus" id="O43300"/>
<dbReference type="BioMuta" id="LRRTM2"/>
<dbReference type="MassIVE" id="O43300"/>
<dbReference type="PaxDb" id="9606-ENSP00000274711"/>
<dbReference type="PeptideAtlas" id="O43300"/>
<dbReference type="ProteomicsDB" id="48875"/>
<dbReference type="ABCD" id="O43300">
    <property type="antibodies" value="1 sequenced antibody"/>
</dbReference>
<dbReference type="Antibodypedia" id="57042">
    <property type="antibodies" value="150 antibodies from 29 providers"/>
</dbReference>
<dbReference type="DNASU" id="26045"/>
<dbReference type="Ensembl" id="ENST00000274711.7">
    <property type="protein sequence ID" value="ENSP00000274711.5"/>
    <property type="gene ID" value="ENSG00000146006.8"/>
</dbReference>
<dbReference type="GeneID" id="26045"/>
<dbReference type="KEGG" id="hsa:26045"/>
<dbReference type="MANE-Select" id="ENST00000274711.7">
    <property type="protein sequence ID" value="ENSP00000274711.5"/>
    <property type="RefSeq nucleotide sequence ID" value="NM_015564.3"/>
    <property type="RefSeq protein sequence ID" value="NP_056379.1"/>
</dbReference>
<dbReference type="UCSC" id="uc011cyz.2">
    <property type="organism name" value="human"/>
</dbReference>
<dbReference type="AGR" id="HGNC:19409"/>
<dbReference type="CTD" id="26045"/>
<dbReference type="DisGeNET" id="26045"/>
<dbReference type="GeneCards" id="LRRTM2"/>
<dbReference type="HGNC" id="HGNC:19409">
    <property type="gene designation" value="LRRTM2"/>
</dbReference>
<dbReference type="HPA" id="ENSG00000146006">
    <property type="expression patterns" value="Tissue enriched (brain)"/>
</dbReference>
<dbReference type="MIM" id="610868">
    <property type="type" value="gene"/>
</dbReference>
<dbReference type="neXtProt" id="NX_O43300"/>
<dbReference type="OpenTargets" id="ENSG00000146006"/>
<dbReference type="PharmGKB" id="PA134993038"/>
<dbReference type="VEuPathDB" id="HostDB:ENSG00000146006"/>
<dbReference type="eggNOG" id="KOG0619">
    <property type="taxonomic scope" value="Eukaryota"/>
</dbReference>
<dbReference type="GeneTree" id="ENSGT00940000160581"/>
<dbReference type="HOGENOM" id="CLU_032965_0_0_1"/>
<dbReference type="InParanoid" id="O43300"/>
<dbReference type="OMA" id="WPLGARM"/>
<dbReference type="OrthoDB" id="2325980at2759"/>
<dbReference type="PAN-GO" id="O43300">
    <property type="GO annotations" value="1 GO annotation based on evolutionary models"/>
</dbReference>
<dbReference type="PhylomeDB" id="O43300"/>
<dbReference type="TreeFam" id="TF332659"/>
<dbReference type="PathwayCommons" id="O43300"/>
<dbReference type="Reactome" id="R-HSA-6794361">
    <property type="pathway name" value="Neurexins and neuroligins"/>
</dbReference>
<dbReference type="SignaLink" id="O43300"/>
<dbReference type="BioGRID-ORCS" id="26045">
    <property type="hits" value="12 hits in 1140 CRISPR screens"/>
</dbReference>
<dbReference type="ChiTaRS" id="LRRTM2">
    <property type="organism name" value="human"/>
</dbReference>
<dbReference type="GenomeRNAi" id="26045"/>
<dbReference type="Pharos" id="O43300">
    <property type="development level" value="Tbio"/>
</dbReference>
<dbReference type="PRO" id="PR:O43300"/>
<dbReference type="Proteomes" id="UP000005640">
    <property type="component" value="Chromosome 5"/>
</dbReference>
<dbReference type="RNAct" id="O43300">
    <property type="molecule type" value="protein"/>
</dbReference>
<dbReference type="Bgee" id="ENSG00000146006">
    <property type="expression patterns" value="Expressed in lateral nuclear group of thalamus and 148 other cell types or tissues"/>
</dbReference>
<dbReference type="ExpressionAtlas" id="O43300">
    <property type="expression patterns" value="baseline and differential"/>
</dbReference>
<dbReference type="GO" id="GO:0060076">
    <property type="term" value="C:excitatory synapse"/>
    <property type="evidence" value="ECO:0007669"/>
    <property type="project" value="Ensembl"/>
</dbReference>
<dbReference type="GO" id="GO:0005615">
    <property type="term" value="C:extracellular space"/>
    <property type="evidence" value="ECO:0000318"/>
    <property type="project" value="GO_Central"/>
</dbReference>
<dbReference type="GO" id="GO:0098982">
    <property type="term" value="C:GABA-ergic synapse"/>
    <property type="evidence" value="ECO:0000314"/>
    <property type="project" value="SynGO"/>
</dbReference>
<dbReference type="GO" id="GO:0098978">
    <property type="term" value="C:glutamatergic synapse"/>
    <property type="evidence" value="ECO:0007669"/>
    <property type="project" value="Ensembl"/>
</dbReference>
<dbReference type="GO" id="GO:0098686">
    <property type="term" value="C:hippocampal mossy fiber to CA3 synapse"/>
    <property type="evidence" value="ECO:0007669"/>
    <property type="project" value="Ensembl"/>
</dbReference>
<dbReference type="GO" id="GO:0098839">
    <property type="term" value="C:postsynaptic density membrane"/>
    <property type="evidence" value="ECO:0007669"/>
    <property type="project" value="Ensembl"/>
</dbReference>
<dbReference type="GO" id="GO:0099634">
    <property type="term" value="C:postsynaptic specialization membrane"/>
    <property type="evidence" value="ECO:0000314"/>
    <property type="project" value="SynGO"/>
</dbReference>
<dbReference type="GO" id="GO:0098685">
    <property type="term" value="C:Schaffer collateral - CA1 synapse"/>
    <property type="evidence" value="ECO:0007669"/>
    <property type="project" value="Ensembl"/>
</dbReference>
<dbReference type="GO" id="GO:0042043">
    <property type="term" value="F:neurexin family protein binding"/>
    <property type="evidence" value="ECO:0007669"/>
    <property type="project" value="Ensembl"/>
</dbReference>
<dbReference type="GO" id="GO:0060291">
    <property type="term" value="P:long-term synaptic potentiation"/>
    <property type="evidence" value="ECO:0007669"/>
    <property type="project" value="Ensembl"/>
</dbReference>
<dbReference type="GO" id="GO:0002091">
    <property type="term" value="P:negative regulation of receptor internalization"/>
    <property type="evidence" value="ECO:0007669"/>
    <property type="project" value="Ensembl"/>
</dbReference>
<dbReference type="GO" id="GO:0051965">
    <property type="term" value="P:positive regulation of synapse assembly"/>
    <property type="evidence" value="ECO:0007669"/>
    <property type="project" value="Ensembl"/>
</dbReference>
<dbReference type="GO" id="GO:0099151">
    <property type="term" value="P:regulation of postsynaptic density assembly"/>
    <property type="evidence" value="ECO:0007669"/>
    <property type="project" value="Ensembl"/>
</dbReference>
<dbReference type="GO" id="GO:0050808">
    <property type="term" value="P:synapse organization"/>
    <property type="evidence" value="ECO:0007669"/>
    <property type="project" value="Ensembl"/>
</dbReference>
<dbReference type="FunFam" id="3.80.10.10:FF:000005">
    <property type="entry name" value="leucine-rich repeat transmembrane neuronal protein 4"/>
    <property type="match status" value="1"/>
</dbReference>
<dbReference type="Gene3D" id="3.80.10.10">
    <property type="entry name" value="Ribonuclease Inhibitor"/>
    <property type="match status" value="1"/>
</dbReference>
<dbReference type="InterPro" id="IPR001611">
    <property type="entry name" value="Leu-rich_rpt"/>
</dbReference>
<dbReference type="InterPro" id="IPR003591">
    <property type="entry name" value="Leu-rich_rpt_typical-subtyp"/>
</dbReference>
<dbReference type="InterPro" id="IPR050467">
    <property type="entry name" value="LRFN"/>
</dbReference>
<dbReference type="InterPro" id="IPR032675">
    <property type="entry name" value="LRR_dom_sf"/>
</dbReference>
<dbReference type="PANTHER" id="PTHR45842:SF22">
    <property type="entry name" value="INSULIN-LIKE GROWTH FACTOR-BINDING PROTEIN COMPLEX ACID LABILE SUBUNIT ISOFORM X1"/>
    <property type="match status" value="1"/>
</dbReference>
<dbReference type="PANTHER" id="PTHR45842">
    <property type="entry name" value="SYNAPTIC ADHESION-LIKE MOLECULE SALM"/>
    <property type="match status" value="1"/>
</dbReference>
<dbReference type="Pfam" id="PF13855">
    <property type="entry name" value="LRR_8"/>
    <property type="match status" value="3"/>
</dbReference>
<dbReference type="PRINTS" id="PR00019">
    <property type="entry name" value="LEURICHRPT"/>
</dbReference>
<dbReference type="SMART" id="SM00369">
    <property type="entry name" value="LRR_TYP"/>
    <property type="match status" value="9"/>
</dbReference>
<dbReference type="SUPFAM" id="SSF52058">
    <property type="entry name" value="L domain-like"/>
    <property type="match status" value="1"/>
</dbReference>
<dbReference type="PROSITE" id="PS51450">
    <property type="entry name" value="LRR"/>
    <property type="match status" value="10"/>
</dbReference>
<keyword id="KW-0002">3D-structure</keyword>
<keyword id="KW-1003">Cell membrane</keyword>
<keyword id="KW-0325">Glycoprotein</keyword>
<keyword id="KW-0433">Leucine-rich repeat</keyword>
<keyword id="KW-0472">Membrane</keyword>
<keyword id="KW-0628">Postsynaptic cell membrane</keyword>
<keyword id="KW-1267">Proteomics identification</keyword>
<keyword id="KW-1185">Reference proteome</keyword>
<keyword id="KW-0677">Repeat</keyword>
<keyword id="KW-0732">Signal</keyword>
<keyword id="KW-0770">Synapse</keyword>
<keyword id="KW-0812">Transmembrane</keyword>
<keyword id="KW-1133">Transmembrane helix</keyword>
<name>LRRT2_HUMAN</name>